<keyword id="KW-0002">3D-structure</keyword>
<keyword id="KW-0007">Acetylation</keyword>
<keyword id="KW-0025">Alternative splicing</keyword>
<keyword id="KW-0963">Cytoplasm</keyword>
<keyword id="KW-0225">Disease variant</keyword>
<keyword id="KW-0271">Exosome</keyword>
<keyword id="KW-1017">Isopeptide bond</keyword>
<keyword id="KW-0523">Neurodegeneration</keyword>
<keyword id="KW-0539">Nucleus</keyword>
<keyword id="KW-0597">Phosphoprotein</keyword>
<keyword id="KW-1267">Proteomics identification</keyword>
<keyword id="KW-1185">Reference proteome</keyword>
<keyword id="KW-0694">RNA-binding</keyword>
<keyword id="KW-0698">rRNA processing</keyword>
<keyword id="KW-0832">Ubl conjugation</keyword>
<sequence length="439" mass="48949">MKETPLSNCERRFLLRAIEEKKRLDGRQTYDYRNIRISFGTDYGCCIVELGKTRVLGQVSCELVSPKLNRATEGILFFNLELSQMAAPAFEPGRQSDLLVKLNRLMERCLRNSKCIDTESLCVVAGEKVWQIRVDLHLLNHDGNIIDAASIAAIVALCHFRRPDVSVQGDEVTLYTPEERDPVPLSIHHMPICVSFAFFQQGTYLLVDPNEREERVMDGLLVIAMNKHREICTIQSSGGIMLLKDQVLRCSKIAGVKVAEITELILKALENDQKVRKEGGKFGFAESIANQRITAFKMEKAPIDTSDVEEKAEEIIAEAEPPSEVVSTPVLWTPGTAQIGEGVENSWGDLEDSEKEDDEGGGDQAIILDGIKMDTGVEVSDIGSQDAPIILSDSEEEEMIILEPDKNPKKIRTQTTSAKQEKAPSKKPVKRRKKKRAAN</sequence>
<name>EXOS9_HUMAN</name>
<accession>Q06265</accession>
<accession>Q12883</accession>
<accession>Q4W5P5</accession>
<accession>Q86Y41</accession>
<accession>Q86Y48</accession>
<dbReference type="EMBL" id="M58460">
    <property type="protein sequence ID" value="AAA58384.1"/>
    <property type="molecule type" value="mRNA"/>
</dbReference>
<dbReference type="EMBL" id="U09215">
    <property type="protein sequence ID" value="AAA18832.1"/>
    <property type="molecule type" value="mRNA"/>
</dbReference>
<dbReference type="EMBL" id="AJ505989">
    <property type="protein sequence ID" value="CAD44530.1"/>
    <property type="molecule type" value="mRNA"/>
</dbReference>
<dbReference type="EMBL" id="AJ517294">
    <property type="protein sequence ID" value="CAD56889.1"/>
    <property type="molecule type" value="mRNA"/>
</dbReference>
<dbReference type="EMBL" id="AC079341">
    <property type="protein sequence ID" value="AAY40968.1"/>
    <property type="molecule type" value="Genomic_DNA"/>
</dbReference>
<dbReference type="CCDS" id="CCDS34057.1">
    <molecule id="Q06265-2"/>
</dbReference>
<dbReference type="CCDS" id="CCDS3722.2">
    <molecule id="Q06265-1"/>
</dbReference>
<dbReference type="PIR" id="G01425">
    <property type="entry name" value="G01425"/>
</dbReference>
<dbReference type="RefSeq" id="NP_001029366.1">
    <molecule id="Q06265-2"/>
    <property type="nucleotide sequence ID" value="NM_001034194.2"/>
</dbReference>
<dbReference type="RefSeq" id="NP_005024.2">
    <molecule id="Q06265-1"/>
    <property type="nucleotide sequence ID" value="NM_005033.3"/>
</dbReference>
<dbReference type="PDB" id="2NN6">
    <property type="method" value="X-ray"/>
    <property type="resolution" value="3.35 A"/>
    <property type="chains" value="A=1-302"/>
</dbReference>
<dbReference type="PDB" id="6D6Q">
    <property type="method" value="EM"/>
    <property type="resolution" value="3.45 A"/>
    <property type="chains" value="A=1-439"/>
</dbReference>
<dbReference type="PDB" id="6D6R">
    <property type="method" value="EM"/>
    <property type="resolution" value="3.45 A"/>
    <property type="chains" value="A=1-439"/>
</dbReference>
<dbReference type="PDB" id="6H25">
    <property type="method" value="EM"/>
    <property type="resolution" value="3.80 A"/>
    <property type="chains" value="A=1-439"/>
</dbReference>
<dbReference type="PDB" id="9G8M">
    <property type="method" value="EM"/>
    <property type="resolution" value="3.30 A"/>
    <property type="chains" value="K=1-439"/>
</dbReference>
<dbReference type="PDB" id="9G8N">
    <property type="method" value="EM"/>
    <property type="resolution" value="3.70 A"/>
    <property type="chains" value="K=1-439"/>
</dbReference>
<dbReference type="PDB" id="9G8O">
    <property type="method" value="EM"/>
    <property type="resolution" value="3.40 A"/>
    <property type="chains" value="K=1-439"/>
</dbReference>
<dbReference type="PDB" id="9G8P">
    <property type="method" value="EM"/>
    <property type="resolution" value="7.00 A"/>
    <property type="chains" value="K=1-439"/>
</dbReference>
<dbReference type="PDBsum" id="2NN6"/>
<dbReference type="PDBsum" id="6D6Q"/>
<dbReference type="PDBsum" id="6D6R"/>
<dbReference type="PDBsum" id="6H25"/>
<dbReference type="PDBsum" id="9G8M"/>
<dbReference type="PDBsum" id="9G8N"/>
<dbReference type="PDBsum" id="9G8O"/>
<dbReference type="PDBsum" id="9G8P"/>
<dbReference type="EMDB" id="EMD-0127"/>
<dbReference type="EMDB" id="EMD-0128"/>
<dbReference type="EMDB" id="EMD-14515"/>
<dbReference type="EMDB" id="EMD-51132"/>
<dbReference type="EMDB" id="EMD-51133"/>
<dbReference type="EMDB" id="EMD-51134"/>
<dbReference type="EMDB" id="EMD-51135"/>
<dbReference type="EMDB" id="EMD-7808"/>
<dbReference type="EMDB" id="EMD-7809"/>
<dbReference type="SMR" id="Q06265"/>
<dbReference type="BioGRID" id="111402">
    <property type="interactions" value="156"/>
</dbReference>
<dbReference type="ComplexPortal" id="CPX-476">
    <property type="entry name" value="Nuclear exosome complex, DIS3-EXOSC10 variant"/>
</dbReference>
<dbReference type="ComplexPortal" id="CPX-591">
    <property type="entry name" value="Nucleolar exosome complex, EXOSC10 variant"/>
</dbReference>
<dbReference type="ComplexPortal" id="CPX-592">
    <property type="entry name" value="Cytoplasmic exosome complex, DIS3L variant"/>
</dbReference>
<dbReference type="ComplexPortal" id="CPX-593">
    <property type="entry name" value="Exosome complex, DIS3 variant"/>
</dbReference>
<dbReference type="ComplexPortal" id="CPX-600">
    <property type="entry name" value="Cytoplasmic exosome complex, DIS3L-EXOSC10 variant"/>
</dbReference>
<dbReference type="CORUM" id="Q06265"/>
<dbReference type="DIP" id="DIP-31286N"/>
<dbReference type="FunCoup" id="Q06265">
    <property type="interactions" value="3541"/>
</dbReference>
<dbReference type="IntAct" id="Q06265">
    <property type="interactions" value="76"/>
</dbReference>
<dbReference type="MINT" id="Q06265"/>
<dbReference type="STRING" id="9606.ENSP00000368984"/>
<dbReference type="GlyGen" id="Q06265">
    <property type="glycosylation" value="1 site, 1 O-linked glycan (1 site)"/>
</dbReference>
<dbReference type="iPTMnet" id="Q06265"/>
<dbReference type="PhosphoSitePlus" id="Q06265"/>
<dbReference type="SwissPalm" id="Q06265"/>
<dbReference type="BioMuta" id="EXOSC9"/>
<dbReference type="DMDM" id="147744559"/>
<dbReference type="jPOST" id="Q06265"/>
<dbReference type="MassIVE" id="Q06265"/>
<dbReference type="PaxDb" id="9606-ENSP00000368984"/>
<dbReference type="PeptideAtlas" id="Q06265"/>
<dbReference type="ProteomicsDB" id="58426">
    <molecule id="Q06265-1"/>
</dbReference>
<dbReference type="ProteomicsDB" id="58427">
    <molecule id="Q06265-2"/>
</dbReference>
<dbReference type="ProteomicsDB" id="58428">
    <molecule id="Q06265-3"/>
</dbReference>
<dbReference type="ProteomicsDB" id="58429">
    <molecule id="Q06265-4"/>
</dbReference>
<dbReference type="Pumba" id="Q06265"/>
<dbReference type="Antibodypedia" id="26749">
    <property type="antibodies" value="146 antibodies from 27 providers"/>
</dbReference>
<dbReference type="DNASU" id="5393"/>
<dbReference type="Ensembl" id="ENST00000243498.10">
    <molecule id="Q06265-1"/>
    <property type="protein sequence ID" value="ENSP00000243498.5"/>
    <property type="gene ID" value="ENSG00000123737.13"/>
</dbReference>
<dbReference type="Ensembl" id="ENST00000379663.7">
    <molecule id="Q06265-2"/>
    <property type="protein sequence ID" value="ENSP00000368984.3"/>
    <property type="gene ID" value="ENSG00000123737.13"/>
</dbReference>
<dbReference type="GeneID" id="5393"/>
<dbReference type="KEGG" id="hsa:5393"/>
<dbReference type="MANE-Select" id="ENST00000243498.10">
    <property type="protein sequence ID" value="ENSP00000243498.5"/>
    <property type="RefSeq nucleotide sequence ID" value="NM_005033.3"/>
    <property type="RefSeq protein sequence ID" value="NP_005024.2"/>
</dbReference>
<dbReference type="UCSC" id="uc003idz.4">
    <molecule id="Q06265-1"/>
    <property type="organism name" value="human"/>
</dbReference>
<dbReference type="AGR" id="HGNC:9137"/>
<dbReference type="CTD" id="5393"/>
<dbReference type="DisGeNET" id="5393"/>
<dbReference type="GeneCards" id="EXOSC9"/>
<dbReference type="HGNC" id="HGNC:9137">
    <property type="gene designation" value="EXOSC9"/>
</dbReference>
<dbReference type="HPA" id="ENSG00000123737">
    <property type="expression patterns" value="Low tissue specificity"/>
</dbReference>
<dbReference type="MalaCards" id="EXOSC9"/>
<dbReference type="MIM" id="606180">
    <property type="type" value="gene"/>
</dbReference>
<dbReference type="MIM" id="618065">
    <property type="type" value="phenotype"/>
</dbReference>
<dbReference type="neXtProt" id="NX_Q06265"/>
<dbReference type="OpenTargets" id="ENSG00000123737"/>
<dbReference type="Orphanet" id="2254">
    <property type="disease" value="Pontocerebellar hypoplasia type 1"/>
</dbReference>
<dbReference type="PharmGKB" id="PA33463"/>
<dbReference type="VEuPathDB" id="HostDB:ENSG00000123737"/>
<dbReference type="eggNOG" id="KOG1614">
    <property type="taxonomic scope" value="Eukaryota"/>
</dbReference>
<dbReference type="GeneTree" id="ENSGT00950000183130"/>
<dbReference type="HOGENOM" id="CLU_038194_7_0_1"/>
<dbReference type="InParanoid" id="Q06265"/>
<dbReference type="OMA" id="GPQFENG"/>
<dbReference type="OrthoDB" id="10264038at2759"/>
<dbReference type="PAN-GO" id="Q06265">
    <property type="GO annotations" value="12 GO annotations based on evolutionary models"/>
</dbReference>
<dbReference type="PhylomeDB" id="Q06265"/>
<dbReference type="TreeFam" id="TF300092"/>
<dbReference type="PathwayCommons" id="Q06265"/>
<dbReference type="Reactome" id="R-HSA-380994">
    <property type="pathway name" value="ATF4 activates genes in response to endoplasmic reticulum stress"/>
</dbReference>
<dbReference type="Reactome" id="R-HSA-429958">
    <property type="pathway name" value="mRNA decay by 3' to 5' exoribonuclease"/>
</dbReference>
<dbReference type="Reactome" id="R-HSA-450385">
    <property type="pathway name" value="Butyrate Response Factor 1 (BRF1) binds and destabilizes mRNA"/>
</dbReference>
<dbReference type="Reactome" id="R-HSA-450513">
    <property type="pathway name" value="Tristetraprolin (TTP, ZFP36) binds and destabilizes mRNA"/>
</dbReference>
<dbReference type="Reactome" id="R-HSA-450604">
    <property type="pathway name" value="KSRP (KHSRP) binds and destabilizes mRNA"/>
</dbReference>
<dbReference type="Reactome" id="R-HSA-6791226">
    <property type="pathway name" value="Major pathway of rRNA processing in the nucleolus and cytosol"/>
</dbReference>
<dbReference type="SignaLink" id="Q06265"/>
<dbReference type="SIGNOR" id="Q06265"/>
<dbReference type="BioGRID-ORCS" id="5393">
    <property type="hits" value="687 hits in 1173 CRISPR screens"/>
</dbReference>
<dbReference type="CD-CODE" id="91857CE7">
    <property type="entry name" value="Nucleolus"/>
</dbReference>
<dbReference type="ChiTaRS" id="EXOSC9">
    <property type="organism name" value="human"/>
</dbReference>
<dbReference type="EvolutionaryTrace" id="Q06265"/>
<dbReference type="GeneWiki" id="Exosome_component_9"/>
<dbReference type="GenomeRNAi" id="5393"/>
<dbReference type="Pharos" id="Q06265">
    <property type="development level" value="Tbio"/>
</dbReference>
<dbReference type="PRO" id="PR:Q06265"/>
<dbReference type="Proteomes" id="UP000005640">
    <property type="component" value="Chromosome 4"/>
</dbReference>
<dbReference type="RNAct" id="Q06265">
    <property type="molecule type" value="protein"/>
</dbReference>
<dbReference type="Bgee" id="ENSG00000123737">
    <property type="expression patterns" value="Expressed in secondary oocyte and 198 other cell types or tissues"/>
</dbReference>
<dbReference type="ExpressionAtlas" id="Q06265">
    <property type="expression patterns" value="baseline and differential"/>
</dbReference>
<dbReference type="GO" id="GO:0005737">
    <property type="term" value="C:cytoplasm"/>
    <property type="evidence" value="ECO:0000314"/>
    <property type="project" value="UniProtKB"/>
</dbReference>
<dbReference type="GO" id="GO:0000177">
    <property type="term" value="C:cytoplasmic exosome (RNase complex)"/>
    <property type="evidence" value="ECO:0000318"/>
    <property type="project" value="GO_Central"/>
</dbReference>
<dbReference type="GO" id="GO:0005829">
    <property type="term" value="C:cytosol"/>
    <property type="evidence" value="ECO:0000314"/>
    <property type="project" value="ComplexPortal"/>
</dbReference>
<dbReference type="GO" id="GO:0000178">
    <property type="term" value="C:exosome (RNase complex)"/>
    <property type="evidence" value="ECO:0000314"/>
    <property type="project" value="UniProtKB"/>
</dbReference>
<dbReference type="GO" id="GO:0070062">
    <property type="term" value="C:extracellular exosome"/>
    <property type="evidence" value="ECO:0007005"/>
    <property type="project" value="UniProtKB"/>
</dbReference>
<dbReference type="GO" id="GO:0000228">
    <property type="term" value="C:nuclear chromosome"/>
    <property type="evidence" value="ECO:0000314"/>
    <property type="project" value="UniProtKB"/>
</dbReference>
<dbReference type="GO" id="GO:0000176">
    <property type="term" value="C:nuclear exosome (RNase complex)"/>
    <property type="evidence" value="ECO:0000314"/>
    <property type="project" value="UniProtKB"/>
</dbReference>
<dbReference type="GO" id="GO:0101019">
    <property type="term" value="C:nucleolar exosome (RNase complex)"/>
    <property type="evidence" value="ECO:0000303"/>
    <property type="project" value="ComplexPortal"/>
</dbReference>
<dbReference type="GO" id="GO:0005730">
    <property type="term" value="C:nucleolus"/>
    <property type="evidence" value="ECO:0000314"/>
    <property type="project" value="UniProtKB"/>
</dbReference>
<dbReference type="GO" id="GO:0005654">
    <property type="term" value="C:nucleoplasm"/>
    <property type="evidence" value="ECO:0000314"/>
    <property type="project" value="UniProtKB"/>
</dbReference>
<dbReference type="GO" id="GO:0005634">
    <property type="term" value="C:nucleus"/>
    <property type="evidence" value="ECO:0000314"/>
    <property type="project" value="UniProtKB"/>
</dbReference>
<dbReference type="GO" id="GO:0000175">
    <property type="term" value="F:3'-5'-RNA exonuclease activity"/>
    <property type="evidence" value="ECO:0000303"/>
    <property type="project" value="UniProtKB"/>
</dbReference>
<dbReference type="GO" id="GO:0035925">
    <property type="term" value="F:mRNA 3'-UTR AU-rich region binding"/>
    <property type="evidence" value="ECO:0000314"/>
    <property type="project" value="GO_Central"/>
</dbReference>
<dbReference type="GO" id="GO:0003723">
    <property type="term" value="F:RNA binding"/>
    <property type="evidence" value="ECO:0007005"/>
    <property type="project" value="UniProtKB"/>
</dbReference>
<dbReference type="GO" id="GO:0061629">
    <property type="term" value="F:RNA polymerase II-specific DNA-binding transcription factor binding"/>
    <property type="evidence" value="ECO:0007669"/>
    <property type="project" value="Ensembl"/>
</dbReference>
<dbReference type="GO" id="GO:0000467">
    <property type="term" value="P:exonucleolytic trimming to generate mature 3'-end of 5.8S rRNA from tricistronic rRNA transcript (SSU-rRNA, 5.8S rRNA, LSU-rRNA)"/>
    <property type="evidence" value="ECO:0000318"/>
    <property type="project" value="GO_Central"/>
</dbReference>
<dbReference type="GO" id="GO:0006955">
    <property type="term" value="P:immune response"/>
    <property type="evidence" value="ECO:0000303"/>
    <property type="project" value="UniProtKB"/>
</dbReference>
<dbReference type="GO" id="GO:0006402">
    <property type="term" value="P:mRNA catabolic process"/>
    <property type="evidence" value="ECO:0000315"/>
    <property type="project" value="UniProtKB"/>
</dbReference>
<dbReference type="GO" id="GO:0071028">
    <property type="term" value="P:nuclear mRNA surveillance"/>
    <property type="evidence" value="ECO:0000315"/>
    <property type="project" value="UniProtKB"/>
</dbReference>
<dbReference type="GO" id="GO:0071035">
    <property type="term" value="P:nuclear polyadenylation-dependent rRNA catabolic process"/>
    <property type="evidence" value="ECO:0000315"/>
    <property type="project" value="UniProtKB"/>
</dbReference>
<dbReference type="GO" id="GO:0000956">
    <property type="term" value="P:nuclear-transcribed mRNA catabolic process"/>
    <property type="evidence" value="ECO:0000315"/>
    <property type="project" value="UniProtKB"/>
</dbReference>
<dbReference type="GO" id="GO:0030307">
    <property type="term" value="P:positive regulation of cell growth"/>
    <property type="evidence" value="ECO:0000315"/>
    <property type="project" value="UniProtKB"/>
</dbReference>
<dbReference type="GO" id="GO:0045944">
    <property type="term" value="P:positive regulation of transcription by RNA polymerase II"/>
    <property type="evidence" value="ECO:0007669"/>
    <property type="project" value="Ensembl"/>
</dbReference>
<dbReference type="GO" id="GO:0006401">
    <property type="term" value="P:RNA catabolic process"/>
    <property type="evidence" value="ECO:0000314"/>
    <property type="project" value="ComplexPortal"/>
</dbReference>
<dbReference type="GO" id="GO:0006396">
    <property type="term" value="P:RNA processing"/>
    <property type="evidence" value="ECO:0000314"/>
    <property type="project" value="ComplexPortal"/>
</dbReference>
<dbReference type="GO" id="GO:0016075">
    <property type="term" value="P:rRNA catabolic process"/>
    <property type="evidence" value="ECO:0000318"/>
    <property type="project" value="GO_Central"/>
</dbReference>
<dbReference type="GO" id="GO:0006364">
    <property type="term" value="P:rRNA processing"/>
    <property type="evidence" value="ECO:0000303"/>
    <property type="project" value="UniProtKB"/>
</dbReference>
<dbReference type="GO" id="GO:0071038">
    <property type="term" value="P:TRAMP-dependent tRNA surveillance pathway"/>
    <property type="evidence" value="ECO:0000318"/>
    <property type="project" value="GO_Central"/>
</dbReference>
<dbReference type="GO" id="GO:0034473">
    <property type="term" value="P:U1 snRNA 3'-end processing"/>
    <property type="evidence" value="ECO:0000318"/>
    <property type="project" value="GO_Central"/>
</dbReference>
<dbReference type="GO" id="GO:0034475">
    <property type="term" value="P:U4 snRNA 3'-end processing"/>
    <property type="evidence" value="ECO:0000318"/>
    <property type="project" value="GO_Central"/>
</dbReference>
<dbReference type="GO" id="GO:0034476">
    <property type="term" value="P:U5 snRNA 3'-end processing"/>
    <property type="evidence" value="ECO:0000318"/>
    <property type="project" value="GO_Central"/>
</dbReference>
<dbReference type="CDD" id="cd11368">
    <property type="entry name" value="RNase_PH_RRP45"/>
    <property type="match status" value="1"/>
</dbReference>
<dbReference type="FunFam" id="3.30.230.70:FF:000005">
    <property type="entry name" value="Exosome complex component RRP45"/>
    <property type="match status" value="1"/>
</dbReference>
<dbReference type="Gene3D" id="3.30.230.70">
    <property type="entry name" value="GHMP Kinase, N-terminal domain"/>
    <property type="match status" value="1"/>
</dbReference>
<dbReference type="InterPro" id="IPR001247">
    <property type="entry name" value="ExoRNase_PH_dom1"/>
</dbReference>
<dbReference type="InterPro" id="IPR015847">
    <property type="entry name" value="ExoRNase_PH_dom2"/>
</dbReference>
<dbReference type="InterPro" id="IPR036345">
    <property type="entry name" value="ExoRNase_PH_dom2_sf"/>
</dbReference>
<dbReference type="InterPro" id="IPR050590">
    <property type="entry name" value="Exosome_comp_Rrp42_subfam"/>
</dbReference>
<dbReference type="InterPro" id="IPR027408">
    <property type="entry name" value="PNPase/RNase_PH_dom_sf"/>
</dbReference>
<dbReference type="InterPro" id="IPR020568">
    <property type="entry name" value="Ribosomal_Su5_D2-typ_SF"/>
</dbReference>
<dbReference type="InterPro" id="IPR033100">
    <property type="entry name" value="Rrp45"/>
</dbReference>
<dbReference type="PANTHER" id="PTHR11097:SF14">
    <property type="entry name" value="EXOSOME COMPLEX COMPONENT RRP45"/>
    <property type="match status" value="1"/>
</dbReference>
<dbReference type="PANTHER" id="PTHR11097">
    <property type="entry name" value="EXOSOME COMPLEX EXONUCLEASE RIBOSOMAL RNA PROCESSING PROTEIN"/>
    <property type="match status" value="1"/>
</dbReference>
<dbReference type="Pfam" id="PF01138">
    <property type="entry name" value="RNase_PH"/>
    <property type="match status" value="1"/>
</dbReference>
<dbReference type="Pfam" id="PF03725">
    <property type="entry name" value="RNase_PH_C"/>
    <property type="match status" value="1"/>
</dbReference>
<dbReference type="SUPFAM" id="SSF55666">
    <property type="entry name" value="Ribonuclease PH domain 2-like"/>
    <property type="match status" value="1"/>
</dbReference>
<dbReference type="SUPFAM" id="SSF54211">
    <property type="entry name" value="Ribosomal protein S5 domain 2-like"/>
    <property type="match status" value="1"/>
</dbReference>
<evidence type="ECO:0000256" key="1">
    <source>
        <dbReference type="SAM" id="MobiDB-lite"/>
    </source>
</evidence>
<evidence type="ECO:0000269" key="2">
    <source>
    </source>
</evidence>
<evidence type="ECO:0000269" key="3">
    <source>
    </source>
</evidence>
<evidence type="ECO:0000269" key="4">
    <source>
    </source>
</evidence>
<evidence type="ECO:0000269" key="5">
    <source>
    </source>
</evidence>
<evidence type="ECO:0000269" key="6">
    <source>
    </source>
</evidence>
<evidence type="ECO:0000269" key="7">
    <source>
    </source>
</evidence>
<evidence type="ECO:0000269" key="8">
    <source>
    </source>
</evidence>
<evidence type="ECO:0000269" key="9">
    <source>
    </source>
</evidence>
<evidence type="ECO:0000269" key="10">
    <source>
    </source>
</evidence>
<evidence type="ECO:0000269" key="11">
    <source>
    </source>
</evidence>
<evidence type="ECO:0000269" key="12">
    <source>
    </source>
</evidence>
<evidence type="ECO:0000303" key="13">
    <source>
    </source>
</evidence>
<evidence type="ECO:0000303" key="14">
    <source>
    </source>
</evidence>
<evidence type="ECO:0000303" key="15">
    <source ref="2"/>
</evidence>
<evidence type="ECO:0000305" key="16"/>
<evidence type="ECO:0007744" key="17">
    <source>
        <dbReference type="PDB" id="2NN6"/>
    </source>
</evidence>
<evidence type="ECO:0007744" key="18">
    <source>
        <dbReference type="PDB" id="6D6Q"/>
    </source>
</evidence>
<evidence type="ECO:0007744" key="19">
    <source>
        <dbReference type="PDB" id="6D6R"/>
    </source>
</evidence>
<evidence type="ECO:0007744" key="20">
    <source>
        <dbReference type="PDB" id="6H25"/>
    </source>
</evidence>
<evidence type="ECO:0007744" key="21">
    <source>
    </source>
</evidence>
<evidence type="ECO:0007744" key="22">
    <source>
    </source>
</evidence>
<evidence type="ECO:0007744" key="23">
    <source>
    </source>
</evidence>
<evidence type="ECO:0007744" key="24">
    <source>
    </source>
</evidence>
<evidence type="ECO:0007744" key="25">
    <source>
    </source>
</evidence>
<evidence type="ECO:0007744" key="26">
    <source>
    </source>
</evidence>
<evidence type="ECO:0007744" key="27">
    <source>
    </source>
</evidence>
<evidence type="ECO:0007744" key="28">
    <source>
    </source>
</evidence>
<evidence type="ECO:0007744" key="29">
    <source>
    </source>
</evidence>
<evidence type="ECO:0007744" key="30">
    <source>
    </source>
</evidence>
<evidence type="ECO:0007744" key="31">
    <source>
    </source>
</evidence>
<evidence type="ECO:0007744" key="32">
    <source>
    </source>
</evidence>
<evidence type="ECO:0007829" key="33">
    <source>
        <dbReference type="PDB" id="2NN6"/>
    </source>
</evidence>
<evidence type="ECO:0007829" key="34">
    <source>
        <dbReference type="PDB" id="6D6Q"/>
    </source>
</evidence>
<feature type="chain" id="PRO_0000139971" description="Exosome complex component RRP45">
    <location>
        <begin position="1"/>
        <end position="439"/>
    </location>
</feature>
<feature type="region of interest" description="ARE binding" evidence="6">
    <location>
        <begin position="1"/>
        <end position="268"/>
    </location>
</feature>
<feature type="region of interest" description="Disordered" evidence="1">
    <location>
        <begin position="335"/>
        <end position="363"/>
    </location>
</feature>
<feature type="region of interest" description="Disordered" evidence="1">
    <location>
        <begin position="391"/>
        <end position="439"/>
    </location>
</feature>
<feature type="compositionally biased region" description="Acidic residues" evidence="1">
    <location>
        <begin position="349"/>
        <end position="361"/>
    </location>
</feature>
<feature type="compositionally biased region" description="Basic residues" evidence="1">
    <location>
        <begin position="425"/>
        <end position="439"/>
    </location>
</feature>
<feature type="modified residue" description="Phosphoserine" evidence="26">
    <location>
        <position position="65"/>
    </location>
</feature>
<feature type="modified residue" description="N6-acetyllysine; alternate" evidence="22">
    <location>
        <position position="297"/>
    </location>
</feature>
<feature type="modified residue" description="Phosphoserine" evidence="21 23 24 25 26 27">
    <location>
        <position position="306"/>
    </location>
</feature>
<feature type="modified residue" description="Phosphoserine" evidence="27">
    <location>
        <position position="346"/>
    </location>
</feature>
<feature type="modified residue" description="Phosphoserine" evidence="21 24">
    <location>
        <position position="392"/>
    </location>
</feature>
<feature type="modified residue" description="Phosphoserine" evidence="21 24">
    <location>
        <position position="394"/>
    </location>
</feature>
<feature type="cross-link" description="Glycyl lysine isopeptide (Lys-Gly) (interchain with G-Cter in SUMO1); alternate" evidence="28">
    <location>
        <position position="297"/>
    </location>
</feature>
<feature type="cross-link" description="Glycyl lysine isopeptide (Lys-Gly) (interchain with G-Cter in SUMO2); alternate" evidence="29 30 31 32">
    <location>
        <position position="297"/>
    </location>
</feature>
<feature type="cross-link" description="Glycyl lysine isopeptide (Lys-Gly) (interchain with G-Cter in SUMO2)" evidence="30 32">
    <location>
        <position position="419"/>
    </location>
</feature>
<feature type="splice variant" id="VSP_025555" description="In isoform 3 and isoform 4." evidence="14 15">
    <location>
        <begin position="1"/>
        <end position="84"/>
    </location>
</feature>
<feature type="splice variant" id="VSP_025556" description="In isoform 2 and isoform 4." evidence="13 15">
    <original>Q</original>
    <variation>QELGFHHVGQTGLEFLTS</variation>
    <location>
        <position position="385"/>
    </location>
</feature>
<feature type="sequence variant" id="VAR_081052" description="In PCH1D; reduced EXOSC9 and exosome levels in patient cells; dbSNP:rs139632595." evidence="10">
    <original>L</original>
    <variation>P</variation>
    <location>
        <position position="14"/>
    </location>
</feature>
<feature type="sequence variant" id="VAR_081053" description="In PCH1D; reduced EXOSC9 and exosome levels in patient cells." evidence="10">
    <location>
        <begin position="161"/>
        <end position="439"/>
    </location>
</feature>
<feature type="sequence variant" id="VAR_051867" description="In dbSNP:rs1803183.">
    <original>I</original>
    <variation>V</variation>
    <location>
        <position position="366"/>
    </location>
</feature>
<feature type="sequence variant" id="VAR_014924" description="In dbSNP:rs1051881.">
    <original>S</original>
    <variation>T</variation>
    <location>
        <position position="425"/>
    </location>
</feature>
<feature type="mutagenesis site" description="Abolishes interaction with SETX." evidence="9">
    <original>PIIL</original>
    <variation>EECP</variation>
    <location>
        <begin position="388"/>
        <end position="391"/>
    </location>
</feature>
<feature type="mutagenesis site" description="Abolishes interaction with SETX." evidence="9">
    <location>
        <begin position="388"/>
        <end position="391"/>
    </location>
</feature>
<feature type="mutagenesis site" description="Abolishes interaction with SETX." evidence="9">
    <location>
        <begin position="390"/>
        <end position="391"/>
    </location>
</feature>
<feature type="mutagenesis site" description="Abolishes interaction with SETX." evidence="9">
    <original>EEEE</original>
    <variation>AAAA</variation>
    <location>
        <begin position="395"/>
        <end position="398"/>
    </location>
</feature>
<feature type="mutagenesis site" description="Abolishes interaction with SETX." evidence="9">
    <location>
        <begin position="395"/>
        <end position="398"/>
    </location>
</feature>
<feature type="helix" evidence="33">
    <location>
        <begin position="8"/>
        <end position="19"/>
    </location>
</feature>
<feature type="strand" evidence="34">
    <location>
        <begin position="24"/>
        <end position="26"/>
    </location>
</feature>
<feature type="strand" evidence="33">
    <location>
        <begin position="36"/>
        <end position="39"/>
    </location>
</feature>
<feature type="strand" evidence="33">
    <location>
        <begin position="45"/>
        <end position="52"/>
    </location>
</feature>
<feature type="strand" evidence="33">
    <location>
        <begin position="54"/>
        <end position="59"/>
    </location>
</feature>
<feature type="strand" evidence="33">
    <location>
        <begin position="62"/>
        <end position="64"/>
    </location>
</feature>
<feature type="turn" evidence="33">
    <location>
        <begin position="69"/>
        <end position="72"/>
    </location>
</feature>
<feature type="strand" evidence="33">
    <location>
        <begin position="76"/>
        <end position="82"/>
    </location>
</feature>
<feature type="turn" evidence="33">
    <location>
        <begin position="84"/>
        <end position="86"/>
    </location>
</feature>
<feature type="strand" evidence="33">
    <location>
        <begin position="92"/>
        <end position="94"/>
    </location>
</feature>
<feature type="helix" evidence="33">
    <location>
        <begin position="96"/>
        <end position="99"/>
    </location>
</feature>
<feature type="helix" evidence="33">
    <location>
        <begin position="101"/>
        <end position="113"/>
    </location>
</feature>
<feature type="strand" evidence="33">
    <location>
        <begin position="118"/>
        <end position="121"/>
    </location>
</feature>
<feature type="strand" evidence="34">
    <location>
        <begin position="122"/>
        <end position="124"/>
    </location>
</feature>
<feature type="turn" evidence="33">
    <location>
        <begin position="125"/>
        <end position="127"/>
    </location>
</feature>
<feature type="strand" evidence="33">
    <location>
        <begin position="128"/>
        <end position="138"/>
    </location>
</feature>
<feature type="helix" evidence="33">
    <location>
        <begin position="146"/>
        <end position="159"/>
    </location>
</feature>
<feature type="strand" evidence="34">
    <location>
        <begin position="165"/>
        <end position="168"/>
    </location>
</feature>
<feature type="strand" evidence="34">
    <location>
        <begin position="171"/>
        <end position="174"/>
    </location>
</feature>
<feature type="helix" evidence="33">
    <location>
        <begin position="176"/>
        <end position="179"/>
    </location>
</feature>
<feature type="strand" evidence="33">
    <location>
        <begin position="191"/>
        <end position="198"/>
    </location>
</feature>
<feature type="turn" evidence="33">
    <location>
        <begin position="200"/>
        <end position="202"/>
    </location>
</feature>
<feature type="strand" evidence="33">
    <location>
        <begin position="203"/>
        <end position="208"/>
    </location>
</feature>
<feature type="helix" evidence="33">
    <location>
        <begin position="211"/>
        <end position="216"/>
    </location>
</feature>
<feature type="strand" evidence="33">
    <location>
        <begin position="220"/>
        <end position="226"/>
    </location>
</feature>
<feature type="turn" evidence="33">
    <location>
        <begin position="227"/>
        <end position="229"/>
    </location>
</feature>
<feature type="strand" evidence="33">
    <location>
        <begin position="230"/>
        <end position="238"/>
    </location>
</feature>
<feature type="helix" evidence="33">
    <location>
        <begin position="244"/>
        <end position="277"/>
    </location>
</feature>
<feature type="strand" evidence="34">
    <location>
        <begin position="284"/>
        <end position="286"/>
    </location>
</feature>
<feature type="helix" evidence="33">
    <location>
        <begin position="287"/>
        <end position="290"/>
    </location>
</feature>
<feature type="strand" evidence="33">
    <location>
        <begin position="291"/>
        <end position="298"/>
    </location>
</feature>
<feature type="modified residue" description="Phosphoserine" evidence="27">
    <location sequence="Q06265-2">
        <position position="409"/>
    </location>
</feature>
<feature type="modified residue" description="Phosphoserine" evidence="27">
    <location sequence="Q06265-2">
        <position position="411"/>
    </location>
</feature>
<feature type="modified residue" description="Phosphoserine" evidence="27">
    <location sequence="Q06265-4">
        <position position="325"/>
    </location>
</feature>
<feature type="modified residue" description="Phosphoserine" evidence="27">
    <location sequence="Q06265-4">
        <position position="327"/>
    </location>
</feature>
<gene>
    <name type="primary">EXOSC9</name>
    <name type="synonym">PMSCL1</name>
</gene>
<comment type="function">
    <text evidence="3 5 6 7">Non-catalytic component of the RNA exosome complex which has 3'-&gt;5' exoribonuclease activity and participates in a multitude of cellular RNA processing and degradation events. In the nucleus, the RNA exosome complex is involved in proper maturation of stable RNA species such as rRNA, snRNA and snoRNA, in the elimination of RNA processing by-products and non-coding 'pervasive' transcripts, such as antisense RNA species and promoter-upstream transcripts (PROMPTs), and of mRNAs with processing defects, thereby limiting or excluding their export to the cytoplasm. The RNA exosome may be involved in Ig class switch recombination (CSR) and/or Ig variable region somatic hypermutation (SHM) by targeting AICDA deamination activity to transcribed dsDNA substrates. In the cytoplasm, the RNA exosome complex is involved in general mRNA turnover and specifically degrades inherently unstable mRNAs containing AU-rich elements (AREs) within their 3' untranslated regions, and in RNA surveillance pathways, preventing translation of aberrant mRNAs. It seems to be involved in degradation of histone mRNA. The catalytic inactive RNA exosome core complex of 9 subunits (Exo-9) is proposed to play a pivotal role in the binding and presentation of RNA for ribonucleolysis, and to serve as a scaffold for the association with catalytic subunits and accessory proteins or complexes. EXOSC9 binds to ARE-containing RNAs.</text>
</comment>
<comment type="subunit">
    <text evidence="2 4 8 9 11 12">Component of the RNA exosome core complex (Exo-9), composed of EXOSC1, EXOSC2, EXOSC3, EXOSC4, EXOSC5, EXOSC6, EXOSC7, EXOSC8 and EXOSC9; within the complex interacts with EXOSC3, EXOSC4, EXOSC5 and DIS3 (PubMed:29906447, PubMed:30047866). The catalytically inactive RNA exosome core complex (Exo-9) associates with the catalytic subunit EXOSC10/RRP6 (PubMed:11719186, PubMed:20531389, PubMed:29906447). Exo-9 may associate with DIS3 to form the nucleolar exosome complex, or DIS3L to form the cytoplasmic exosome complex (PubMed:11719186, PubMed:20531389, PubMed:29906447). Exo-9 is formed by a hexameric base ring consisting of the heterodimers EXOSC4-EXOSC9, EXOSC5-EXOSC8 and EXOSC6-EXOSC7, and a cap ring consisting of EXOSC1, EXOSC2 and EXOSC3 (PubMed:11719186, PubMed:12788944, PubMed:20531389, PubMed:30047866). The RNA exosome complex associates with cofactors C1D/RRP47, MPHOSPH6/MPP6 and MTREX/MTR4 (PubMed:30047866). Interacts (via C-terminus region) with SETX (via N-terminus domain); the interaction enhances SETX sumoylation (PubMed:24105744). Interacts with DIS3; the interaction is direct (PubMed:30047866).</text>
</comment>
<comment type="interaction">
    <interactant intactId="EBI-347966">
        <id>Q06265</id>
    </interactant>
    <interactant intactId="EBI-371823">
        <id>Q9NPD3</id>
        <label>EXOSC4</label>
    </interactant>
    <organismsDiffer>false</organismsDiffer>
    <experiments>9</experiments>
</comment>
<comment type="subcellular location">
    <subcellularLocation>
        <location evidence="3">Cytoplasm</location>
    </subcellularLocation>
    <subcellularLocation>
        <location evidence="9">Nucleus</location>
    </subcellularLocation>
    <subcellularLocation>
        <location evidence="9">Nucleus</location>
        <location evidence="9">Nucleolus</location>
    </subcellularLocation>
    <subcellularLocation>
        <location evidence="9">Nucleus</location>
        <location evidence="9">Nucleoplasm</location>
    </subcellularLocation>
    <text evidence="9">Colocalizes with SETX in nuclear foci upon induction of transcription-related DNA damage at the S phase (PubMed:24105744).</text>
</comment>
<comment type="subcellular location">
    <molecule>Isoform 1</molecule>
    <subcellularLocation>
        <location>Nucleus</location>
        <location>Nucleolus</location>
    </subcellularLocation>
</comment>
<comment type="subcellular location">
    <molecule>Isoform 2</molecule>
    <subcellularLocation>
        <location>Nucleus</location>
        <location>Nucleolus</location>
    </subcellularLocation>
</comment>
<comment type="subcellular location">
    <molecule>Isoform 3</molecule>
    <subcellularLocation>
        <location>Nucleus</location>
    </subcellularLocation>
    <text>Excluded from the nucleolus.</text>
</comment>
<comment type="alternative products">
    <event type="alternative splicing"/>
    <isoform>
        <id>Q06265-1</id>
        <name>1</name>
        <name>PM/SCL-75c-alpha</name>
        <sequence type="displayed"/>
    </isoform>
    <isoform>
        <id>Q06265-2</id>
        <name>2</name>
        <name>PM/SCL-75c-beta</name>
        <sequence type="described" ref="VSP_025556"/>
    </isoform>
    <isoform>
        <id>Q06265-3</id>
        <name>3</name>
        <name>PM/SCL-75a-alpha</name>
        <sequence type="described" ref="VSP_025555"/>
    </isoform>
    <isoform>
        <id>Q06265-4</id>
        <name>4</name>
        <name>PM/SCL-75a-beta</name>
        <sequence type="described" ref="VSP_025555 VSP_025556"/>
    </isoform>
</comment>
<comment type="disease" evidence="10">
    <disease id="DI-05293">
        <name>Pontocerebellar hypoplasia 1D</name>
        <acronym>PCH1D</acronym>
        <description>An autosomal recessive neurologic disorder with onset at birth or in infancy, and characterized by progressive axonal motor neuronopathy, severe generalized hypotonia, respiratory insufficiency, and cerebellar atrophy. Death in childhood may occur.</description>
        <dbReference type="MIM" id="618065"/>
    </disease>
    <text>The disease is caused by variants affecting the gene represented in this entry.</text>
</comment>
<comment type="similarity">
    <text evidence="16">Belongs to the RNase PH family.</text>
</comment>
<comment type="caution">
    <text evidence="16">The six exosome core subunits containing a RNase PH-domain are not phosphorolytically active.</text>
</comment>
<protein>
    <recommendedName>
        <fullName>Exosome complex component RRP45</fullName>
    </recommendedName>
    <alternativeName>
        <fullName>Autoantigen PM/Scl 1</fullName>
    </alternativeName>
    <alternativeName>
        <fullName>Exosome component 9</fullName>
    </alternativeName>
    <alternativeName>
        <fullName>P75 polymyositis-scleroderma overlap syndrome-associated autoantigen</fullName>
    </alternativeName>
    <alternativeName>
        <fullName>Polymyositis/scleroderma autoantigen 1</fullName>
    </alternativeName>
    <alternativeName>
        <fullName>Polymyositis/scleroderma autoantigen 75 kDa</fullName>
        <shortName>PM/Scl-75</shortName>
    </alternativeName>
</protein>
<organism>
    <name type="scientific">Homo sapiens</name>
    <name type="common">Human</name>
    <dbReference type="NCBI Taxonomy" id="9606"/>
    <lineage>
        <taxon>Eukaryota</taxon>
        <taxon>Metazoa</taxon>
        <taxon>Chordata</taxon>
        <taxon>Craniata</taxon>
        <taxon>Vertebrata</taxon>
        <taxon>Euteleostomi</taxon>
        <taxon>Mammalia</taxon>
        <taxon>Eutheria</taxon>
        <taxon>Euarchontoglires</taxon>
        <taxon>Primates</taxon>
        <taxon>Haplorrhini</taxon>
        <taxon>Catarrhini</taxon>
        <taxon>Hominidae</taxon>
        <taxon>Homo</taxon>
    </lineage>
</organism>
<proteinExistence type="evidence at protein level"/>
<reference key="1">
    <citation type="journal article" date="1991" name="J. Exp. Med.">
        <title>Molecular characterization of an autoantigen of PM-Scl in the polymyositis/scleroderma overlap syndrome: a unique and complete human cDNA encoding an apparent 75-kD acidic protein of the nucleolar complex.</title>
        <authorList>
            <person name="Alderuccio F."/>
            <person name="Chan E.K.L."/>
            <person name="Tan E.M."/>
        </authorList>
    </citation>
    <scope>NUCLEOTIDE SEQUENCE [MRNA] (ISOFORM 3)</scope>
    <source>
        <tissue>Lymphoblastoma</tissue>
    </source>
</reference>
<reference key="2">
    <citation type="submission" date="1994-04" db="EMBL/GenBank/DDBJ databases">
        <title>Nucleotide sequence of an alternatively spliced cDNA coding for PM-Scl-75, an autoantigen of the Polymyositis/Scleroderma overlap syndrome.</title>
        <authorList>
            <person name="Stahnke G."/>
            <person name="Haubruck H."/>
        </authorList>
    </citation>
    <scope>NUCLEOTIDE SEQUENCE [MRNA] (ISOFORM 4)</scope>
</reference>
<reference key="3">
    <citation type="journal article" date="2003" name="J. Biol. Chem.">
        <title>The association of the human PM/Scl-75 autoantigen with the exosome is dependent on a newly identified N terminus.</title>
        <authorList>
            <person name="Raijmakers R."/>
            <person name="Egberts W.V."/>
            <person name="van Venrooij W.J."/>
            <person name="Pruijn G.J."/>
        </authorList>
    </citation>
    <scope>NUCLEOTIDE SEQUENCE [MRNA] (ISOFORMS 1 AND 2)</scope>
    <scope>SUBCELLULAR LOCATION</scope>
    <scope>IDENTIFICATION IN THE RNA EXOSOME COMPLEX</scope>
</reference>
<reference key="4">
    <citation type="journal article" date="2005" name="Nature">
        <title>Generation and annotation of the DNA sequences of human chromosomes 2 and 4.</title>
        <authorList>
            <person name="Hillier L.W."/>
            <person name="Graves T.A."/>
            <person name="Fulton R.S."/>
            <person name="Fulton L.A."/>
            <person name="Pepin K.H."/>
            <person name="Minx P."/>
            <person name="Wagner-McPherson C."/>
            <person name="Layman D."/>
            <person name="Wylie K."/>
            <person name="Sekhon M."/>
            <person name="Becker M.C."/>
            <person name="Fewell G.A."/>
            <person name="Delehaunty K.D."/>
            <person name="Miner T.L."/>
            <person name="Nash W.E."/>
            <person name="Kremitzki C."/>
            <person name="Oddy L."/>
            <person name="Du H."/>
            <person name="Sun H."/>
            <person name="Bradshaw-Cordum H."/>
            <person name="Ali J."/>
            <person name="Carter J."/>
            <person name="Cordes M."/>
            <person name="Harris A."/>
            <person name="Isak A."/>
            <person name="van Brunt A."/>
            <person name="Nguyen C."/>
            <person name="Du F."/>
            <person name="Courtney L."/>
            <person name="Kalicki J."/>
            <person name="Ozersky P."/>
            <person name="Abbott S."/>
            <person name="Armstrong J."/>
            <person name="Belter E.A."/>
            <person name="Caruso L."/>
            <person name="Cedroni M."/>
            <person name="Cotton M."/>
            <person name="Davidson T."/>
            <person name="Desai A."/>
            <person name="Elliott G."/>
            <person name="Erb T."/>
            <person name="Fronick C."/>
            <person name="Gaige T."/>
            <person name="Haakenson W."/>
            <person name="Haglund K."/>
            <person name="Holmes A."/>
            <person name="Harkins R."/>
            <person name="Kim K."/>
            <person name="Kruchowski S.S."/>
            <person name="Strong C.M."/>
            <person name="Grewal N."/>
            <person name="Goyea E."/>
            <person name="Hou S."/>
            <person name="Levy A."/>
            <person name="Martinka S."/>
            <person name="Mead K."/>
            <person name="McLellan M.D."/>
            <person name="Meyer R."/>
            <person name="Randall-Maher J."/>
            <person name="Tomlinson C."/>
            <person name="Dauphin-Kohlberg S."/>
            <person name="Kozlowicz-Reilly A."/>
            <person name="Shah N."/>
            <person name="Swearengen-Shahid S."/>
            <person name="Snider J."/>
            <person name="Strong J.T."/>
            <person name="Thompson J."/>
            <person name="Yoakum M."/>
            <person name="Leonard S."/>
            <person name="Pearman C."/>
            <person name="Trani L."/>
            <person name="Radionenko M."/>
            <person name="Waligorski J.E."/>
            <person name="Wang C."/>
            <person name="Rock S.M."/>
            <person name="Tin-Wollam A.-M."/>
            <person name="Maupin R."/>
            <person name="Latreille P."/>
            <person name="Wendl M.C."/>
            <person name="Yang S.-P."/>
            <person name="Pohl C."/>
            <person name="Wallis J.W."/>
            <person name="Spieth J."/>
            <person name="Bieri T.A."/>
            <person name="Berkowicz N."/>
            <person name="Nelson J.O."/>
            <person name="Osborne J."/>
            <person name="Ding L."/>
            <person name="Meyer R."/>
            <person name="Sabo A."/>
            <person name="Shotland Y."/>
            <person name="Sinha P."/>
            <person name="Wohldmann P.E."/>
            <person name="Cook L.L."/>
            <person name="Hickenbotham M.T."/>
            <person name="Eldred J."/>
            <person name="Williams D."/>
            <person name="Jones T.A."/>
            <person name="She X."/>
            <person name="Ciccarelli F.D."/>
            <person name="Izaurralde E."/>
            <person name="Taylor J."/>
            <person name="Schmutz J."/>
            <person name="Myers R.M."/>
            <person name="Cox D.R."/>
            <person name="Huang X."/>
            <person name="McPherson J.D."/>
            <person name="Mardis E.R."/>
            <person name="Clifton S.W."/>
            <person name="Warren W.C."/>
            <person name="Chinwalla A.T."/>
            <person name="Eddy S.R."/>
            <person name="Marra M.A."/>
            <person name="Ovcharenko I."/>
            <person name="Furey T.S."/>
            <person name="Miller W."/>
            <person name="Eichler E.E."/>
            <person name="Bork P."/>
            <person name="Suyama M."/>
            <person name="Torrents D."/>
            <person name="Waterston R.H."/>
            <person name="Wilson R.K."/>
        </authorList>
    </citation>
    <scope>NUCLEOTIDE SEQUENCE [LARGE SCALE GENOMIC DNA]</scope>
</reference>
<reference key="5">
    <citation type="journal article" date="1999" name="Genes Dev.">
        <title>The yeast exosome and human PM-Scl are related complexes of 3'--&gt;5' exonucleases.</title>
        <authorList>
            <person name="Allmang C."/>
            <person name="Petfalski E."/>
            <person name="Podtelejnikov A."/>
            <person name="Mann M."/>
            <person name="Tollervey D."/>
            <person name="Mitchell P."/>
        </authorList>
    </citation>
    <scope>CHARACTERIZATION</scope>
</reference>
<reference key="6">
    <citation type="journal article" date="2001" name="Cell">
        <title>AU binding proteins recruit the exosome to degrade ARE-containing mRNAs.</title>
        <authorList>
            <person name="Chen C.-Y."/>
            <person name="Gherzi R."/>
            <person name="Ong S.-E."/>
            <person name="Chan E.L."/>
            <person name="Raijmakers R."/>
            <person name="Pruijn G.J.M."/>
            <person name="Stoecklin G."/>
            <person name="Moroni C."/>
            <person name="Mann M."/>
            <person name="Karin M."/>
        </authorList>
    </citation>
    <scope>IDENTIFICATION BY MASS SPECTROMETRY</scope>
    <scope>IDENTIFICATION IN THE RNA EXOSOME CORE COMPLEX</scope>
</reference>
<reference key="7">
    <citation type="journal article" date="2002" name="EMBO J.">
        <title>The mammalian exosome mediates the efficient degradation of mRNAs that contain AU-rich elements.</title>
        <authorList>
            <person name="Mukherjee D."/>
            <person name="Gao M."/>
            <person name="O'Connor J.P."/>
            <person name="Raijmakers R."/>
            <person name="Pruijn G."/>
            <person name="Lutz C.S."/>
            <person name="Wilusz J."/>
        </authorList>
    </citation>
    <scope>FUNCTION IN ARE-CONTAINING MRNA-BINDING AND CYTOPLASMIC MRNA DEGRADATION</scope>
    <scope>SUBCELLULAR LOCATION</scope>
</reference>
<reference key="8">
    <citation type="journal article" date="2006" name="Cell">
        <title>Global, in vivo, and site-specific phosphorylation dynamics in signaling networks.</title>
        <authorList>
            <person name="Olsen J.V."/>
            <person name="Blagoev B."/>
            <person name="Gnad F."/>
            <person name="Macek B."/>
            <person name="Kumar C."/>
            <person name="Mortensen P."/>
            <person name="Mann M."/>
        </authorList>
    </citation>
    <scope>IDENTIFICATION BY MASS SPECTROMETRY [LARGE SCALE ANALYSIS]</scope>
    <source>
        <tissue>Cervix carcinoma</tissue>
    </source>
</reference>
<reference key="9">
    <citation type="journal article" date="2006" name="Mol. Cell">
        <title>Adenylation and exosome-mediated degradation of cotranscriptionally cleaved pre-messenger RNA in human cells.</title>
        <authorList>
            <person name="West S."/>
            <person name="Gromak N."/>
            <person name="Norbury C.J."/>
            <person name="Proudfoot N.J."/>
        </authorList>
    </citation>
    <scope>FUNCTION IN NUCLEAR PRE-MRNA DEGRADATION</scope>
</reference>
<reference key="10">
    <citation type="journal article" date="2006" name="RNA">
        <title>Sequence-specific RNA binding mediated by the RNase PH domain of components of the exosome.</title>
        <authorList>
            <person name="Anderson J.R."/>
            <person name="Mukherjee D."/>
            <person name="Muthukumaraswamy K."/>
            <person name="Moraes K.C."/>
            <person name="Wilusz C.J."/>
            <person name="Wilusz J."/>
        </authorList>
    </citation>
    <scope>FUNCTION</scope>
    <scope>ARE BINDING</scope>
</reference>
<reference key="11">
    <citation type="journal article" date="2007" name="RNA">
        <title>Human cell growth requires a functional cytoplasmic exosome, which is involved in various mRNA decay pathways.</title>
        <authorList>
            <person name="van Dijk E.L."/>
            <person name="Schilders G."/>
            <person name="Pruijn G.J."/>
        </authorList>
    </citation>
    <scope>FUNCTION IN MRNA DEGRADATION</scope>
    <scope>SUBCELLULAR LOCATION</scope>
</reference>
<reference key="12">
    <citation type="journal article" date="2008" name="Proc. Natl. Acad. Sci. U.S.A.">
        <title>A quantitative atlas of mitotic phosphorylation.</title>
        <authorList>
            <person name="Dephoure N."/>
            <person name="Zhou C."/>
            <person name="Villen J."/>
            <person name="Beausoleil S.A."/>
            <person name="Bakalarski C.E."/>
            <person name="Elledge S.J."/>
            <person name="Gygi S.P."/>
        </authorList>
    </citation>
    <scope>PHOSPHORYLATION [LARGE SCALE ANALYSIS] AT SER-306; SER-392 AND SER-394</scope>
    <scope>IDENTIFICATION BY MASS SPECTROMETRY [LARGE SCALE ANALYSIS]</scope>
    <source>
        <tissue>Cervix carcinoma</tissue>
    </source>
</reference>
<reference key="13">
    <citation type="journal article" date="2009" name="Anal. Chem.">
        <title>Lys-N and trypsin cover complementary parts of the phosphoproteome in a refined SCX-based approach.</title>
        <authorList>
            <person name="Gauci S."/>
            <person name="Helbig A.O."/>
            <person name="Slijper M."/>
            <person name="Krijgsveld J."/>
            <person name="Heck A.J."/>
            <person name="Mohammed S."/>
        </authorList>
    </citation>
    <scope>IDENTIFICATION BY MASS SPECTROMETRY [LARGE SCALE ANALYSIS]</scope>
</reference>
<reference key="14">
    <citation type="journal article" date="2009" name="Sci. Signal.">
        <title>Quantitative phosphoproteomic analysis of T cell receptor signaling reveals system-wide modulation of protein-protein interactions.</title>
        <authorList>
            <person name="Mayya V."/>
            <person name="Lundgren D.H."/>
            <person name="Hwang S.-I."/>
            <person name="Rezaul K."/>
            <person name="Wu L."/>
            <person name="Eng J.K."/>
            <person name="Rodionov V."/>
            <person name="Han D.K."/>
        </authorList>
    </citation>
    <scope>PHOSPHORYLATION [LARGE SCALE ANALYSIS] AT SER-306</scope>
    <scope>IDENTIFICATION BY MASS SPECTROMETRY [LARGE SCALE ANALYSIS]</scope>
    <source>
        <tissue>Leukemic T-cell</tissue>
    </source>
</reference>
<reference key="15">
    <citation type="journal article" date="2009" name="Science">
        <title>Lysine acetylation targets protein complexes and co-regulates major cellular functions.</title>
        <authorList>
            <person name="Choudhary C."/>
            <person name="Kumar C."/>
            <person name="Gnad F."/>
            <person name="Nielsen M.L."/>
            <person name="Rehman M."/>
            <person name="Walther T.C."/>
            <person name="Olsen J.V."/>
            <person name="Mann M."/>
        </authorList>
    </citation>
    <scope>ACETYLATION [LARGE SCALE ANALYSIS] AT LYS-297</scope>
    <scope>IDENTIFICATION BY MASS SPECTROMETRY [LARGE SCALE ANALYSIS]</scope>
</reference>
<reference key="16">
    <citation type="journal article" date="2010" name="EMBO J.">
        <title>Dis3-like 1: a novel exoribonuclease associated with the human exosome.</title>
        <authorList>
            <person name="Staals R.H."/>
            <person name="Bronkhorst A.W."/>
            <person name="Schilders G."/>
            <person name="Slomovic S."/>
            <person name="Schuster G."/>
            <person name="Heck A.J."/>
            <person name="Raijmakers R."/>
            <person name="Pruijn G.J."/>
        </authorList>
    </citation>
    <scope>IDENTIFICATION IN THE RNA EXOSOME COMPLEX</scope>
    <scope>IDENTIFICATION BY MASS SPECTROMETRY</scope>
</reference>
<reference key="17">
    <citation type="journal article" date="2010" name="Sci. Signal.">
        <title>Quantitative phosphoproteomics reveals widespread full phosphorylation site occupancy during mitosis.</title>
        <authorList>
            <person name="Olsen J.V."/>
            <person name="Vermeulen M."/>
            <person name="Santamaria A."/>
            <person name="Kumar C."/>
            <person name="Miller M.L."/>
            <person name="Jensen L.J."/>
            <person name="Gnad F."/>
            <person name="Cox J."/>
            <person name="Jensen T.S."/>
            <person name="Nigg E.A."/>
            <person name="Brunak S."/>
            <person name="Mann M."/>
        </authorList>
    </citation>
    <scope>PHOSPHORYLATION [LARGE SCALE ANALYSIS] AT SER-306; SER-392 AND SER-394</scope>
    <scope>IDENTIFICATION BY MASS SPECTROMETRY [LARGE SCALE ANALYSIS]</scope>
    <source>
        <tissue>Cervix carcinoma</tissue>
    </source>
</reference>
<reference key="18">
    <citation type="journal article" date="2011" name="BMC Syst. Biol.">
        <title>Initial characterization of the human central proteome.</title>
        <authorList>
            <person name="Burkard T.R."/>
            <person name="Planyavsky M."/>
            <person name="Kaupe I."/>
            <person name="Breitwieser F.P."/>
            <person name="Buerckstuemmer T."/>
            <person name="Bennett K.L."/>
            <person name="Superti-Furga G."/>
            <person name="Colinge J."/>
        </authorList>
    </citation>
    <scope>IDENTIFICATION BY MASS SPECTROMETRY [LARGE SCALE ANALYSIS]</scope>
</reference>
<reference key="19">
    <citation type="journal article" date="2011" name="Sci. Signal.">
        <title>System-wide temporal characterization of the proteome and phosphoproteome of human embryonic stem cell differentiation.</title>
        <authorList>
            <person name="Rigbolt K.T."/>
            <person name="Prokhorova T.A."/>
            <person name="Akimov V."/>
            <person name="Henningsen J."/>
            <person name="Johansen P.T."/>
            <person name="Kratchmarova I."/>
            <person name="Kassem M."/>
            <person name="Mann M."/>
            <person name="Olsen J.V."/>
            <person name="Blagoev B."/>
        </authorList>
    </citation>
    <scope>PHOSPHORYLATION [LARGE SCALE ANALYSIS] AT SER-306</scope>
    <scope>IDENTIFICATION BY MASS SPECTROMETRY [LARGE SCALE ANALYSIS]</scope>
</reference>
<reference key="20">
    <citation type="journal article" date="2012" name="Proc. Natl. Acad. Sci. U.S.A.">
        <title>N-terminal acetylome analyses and functional insights of the N-terminal acetyltransferase NatB.</title>
        <authorList>
            <person name="Van Damme P."/>
            <person name="Lasa M."/>
            <person name="Polevoda B."/>
            <person name="Gazquez C."/>
            <person name="Elosegui-Artola A."/>
            <person name="Kim D.S."/>
            <person name="De Juan-Pardo E."/>
            <person name="Demeyer K."/>
            <person name="Hole K."/>
            <person name="Larrea E."/>
            <person name="Timmerman E."/>
            <person name="Prieto J."/>
            <person name="Arnesen T."/>
            <person name="Sherman F."/>
            <person name="Gevaert K."/>
            <person name="Aldabe R."/>
        </authorList>
    </citation>
    <scope>IDENTIFICATION BY MASS SPECTROMETRY [LARGE SCALE ANALYSIS]</scope>
</reference>
<reference key="21">
    <citation type="journal article" date="2013" name="Genes Dev.">
        <title>A SUMO-dependent interaction between Senataxin and the exosome, disrupted in the neurodegenerative disease AOA2, targets the exosome to sites of transcription-induced DNA damage.</title>
        <authorList>
            <person name="Richard P."/>
            <person name="Feng S."/>
            <person name="Manley J.L."/>
        </authorList>
    </citation>
    <scope>INTERACTION WITH SETX</scope>
    <scope>SUBCELLULAR LOCATION</scope>
    <scope>MUTAGENESIS OF 388-PRO--LEU-391; 390-ILE-LEU-391 AND 395-GLU--GLU-398</scope>
</reference>
<reference key="22">
    <citation type="journal article" date="2013" name="J. Proteome Res.">
        <title>Toward a comprehensive characterization of a human cancer cell phosphoproteome.</title>
        <authorList>
            <person name="Zhou H."/>
            <person name="Di Palma S."/>
            <person name="Preisinger C."/>
            <person name="Peng M."/>
            <person name="Polat A.N."/>
            <person name="Heck A.J."/>
            <person name="Mohammed S."/>
        </authorList>
    </citation>
    <scope>PHOSPHORYLATION [LARGE SCALE ANALYSIS] AT SER-65 AND SER-306</scope>
    <scope>IDENTIFICATION BY MASS SPECTROMETRY [LARGE SCALE ANALYSIS]</scope>
    <source>
        <tissue>Cervix carcinoma</tissue>
        <tissue>Erythroleukemia</tissue>
    </source>
</reference>
<reference key="23">
    <citation type="journal article" date="2014" name="J. Proteomics">
        <title>An enzyme assisted RP-RPLC approach for in-depth analysis of human liver phosphoproteome.</title>
        <authorList>
            <person name="Bian Y."/>
            <person name="Song C."/>
            <person name="Cheng K."/>
            <person name="Dong M."/>
            <person name="Wang F."/>
            <person name="Huang J."/>
            <person name="Sun D."/>
            <person name="Wang L."/>
            <person name="Ye M."/>
            <person name="Zou H."/>
        </authorList>
    </citation>
    <scope>PHOSPHORYLATION [LARGE SCALE ANALYSIS] AT SER-306 AND SER-346</scope>
    <scope>PHOSPHORYLATION [LARGE SCALE ANALYSIS] AT SER-409 AND SER-411 (ISOFORM 2)</scope>
    <scope>PHOSPHORYLATION [LARGE SCALE ANALYSIS] AT SER-325 AND SER-327 (ISOFORM 4)</scope>
    <scope>IDENTIFICATION BY MASS SPECTROMETRY [LARGE SCALE ANALYSIS]</scope>
    <source>
        <tissue>Liver</tissue>
    </source>
</reference>
<reference key="24">
    <citation type="journal article" date="2014" name="Nat. Struct. Mol. Biol.">
        <title>Uncovering global SUMOylation signaling networks in a site-specific manner.</title>
        <authorList>
            <person name="Hendriks I.A."/>
            <person name="D'Souza R.C."/>
            <person name="Yang B."/>
            <person name="Verlaan-de Vries M."/>
            <person name="Mann M."/>
            <person name="Vertegaal A.C."/>
        </authorList>
    </citation>
    <scope>SUMOYLATION [LARGE SCALE ANALYSIS] AT LYS-297</scope>
    <scope>IDENTIFICATION BY MASS SPECTROMETRY [LARGE SCALE ANALYSIS]</scope>
</reference>
<reference key="25">
    <citation type="journal article" date="2014" name="Proc. Natl. Acad. Sci. U.S.A.">
        <title>Mapping of SUMO sites and analysis of SUMOylation changes induced by external stimuli.</title>
        <authorList>
            <person name="Impens F."/>
            <person name="Radoshevich L."/>
            <person name="Cossart P."/>
            <person name="Ribet D."/>
        </authorList>
    </citation>
    <scope>SUMOYLATION [LARGE SCALE ANALYSIS] AT LYS-297</scope>
    <scope>IDENTIFICATION BY MASS SPECTROMETRY [LARGE SCALE ANALYSIS]</scope>
</reference>
<reference key="26">
    <citation type="journal article" date="2015" name="Cell Rep.">
        <title>SUMO-2 orchestrates chromatin modifiers in response to DNA damage.</title>
        <authorList>
            <person name="Hendriks I.A."/>
            <person name="Treffers L.W."/>
            <person name="Verlaan-de Vries M."/>
            <person name="Olsen J.V."/>
            <person name="Vertegaal A.C."/>
        </authorList>
    </citation>
    <scope>SUMOYLATION [LARGE SCALE ANALYSIS] AT LYS-297</scope>
    <scope>IDENTIFICATION BY MASS SPECTROMETRY [LARGE SCALE ANALYSIS]</scope>
</reference>
<reference key="27">
    <citation type="journal article" date="2015" name="Mol. Cell. Proteomics">
        <title>System-wide analysis of SUMOylation dynamics in response to replication stress reveals novel small ubiquitin-like modified target proteins and acceptor lysines relevant for genome stability.</title>
        <authorList>
            <person name="Xiao Z."/>
            <person name="Chang J.G."/>
            <person name="Hendriks I.A."/>
            <person name="Sigurdsson J.O."/>
            <person name="Olsen J.V."/>
            <person name="Vertegaal A.C."/>
        </authorList>
    </citation>
    <scope>SUMOYLATION [LARGE SCALE ANALYSIS] AT LYS-297 AND LYS-419</scope>
    <scope>IDENTIFICATION BY MASS SPECTROMETRY [LARGE SCALE ANALYSIS]</scope>
</reference>
<reference key="28">
    <citation type="journal article" date="2017" name="Nat. Struct. Mol. Biol.">
        <title>Site-specific mapping of the human SUMO proteome reveals co-modification with phosphorylation.</title>
        <authorList>
            <person name="Hendriks I.A."/>
            <person name="Lyon D."/>
            <person name="Young C."/>
            <person name="Jensen L.J."/>
            <person name="Vertegaal A.C."/>
            <person name="Nielsen M.L."/>
        </authorList>
    </citation>
    <scope>SUMOYLATION [LARGE SCALE ANALYSIS] AT LYS-297 AND LYS-419</scope>
    <scope>IDENTIFICATION BY MASS SPECTROMETRY [LARGE SCALE ANALYSIS]</scope>
</reference>
<reference key="29">
    <citation type="journal article" date="2018" name="Am. J. Hum. Genet.">
        <title>Variants in EXOSC9 disrupt the RNA exosome and result in cerebellar atrophy with spinal motor neuronopathy.</title>
        <authorList>
            <person name="Burns D.T."/>
            <person name="Donkervoort S."/>
            <person name="Mueller J.S."/>
            <person name="Knierim E."/>
            <person name="Bharucha-Goebel D."/>
            <person name="Faqeih E.A."/>
            <person name="Bell S.K."/>
            <person name="Alfaifi A.Y."/>
            <person name="Monies D."/>
            <person name="Millan F."/>
            <person name="Retterer K."/>
            <person name="Dyack S."/>
            <person name="MacKay S."/>
            <person name="Morales-Gonzalez S."/>
            <person name="Giunta M."/>
            <person name="Munro B."/>
            <person name="Hudson G."/>
            <person name="Scavina M."/>
            <person name="Baker L."/>
            <person name="Massini T.C."/>
            <person name="Lek M."/>
            <person name="Hu Y."/>
            <person name="Ezzo D."/>
            <person name="Alkuraya F.S."/>
            <person name="Kang P.B."/>
            <person name="Griffin H."/>
            <person name="Foley A.R."/>
            <person name="Schuelke M."/>
            <person name="Horvath R."/>
            <person name="Boennemann C.G."/>
        </authorList>
    </citation>
    <scope>INVOLVEMENT IN PCH1D</scope>
    <scope>VARIANTS PCH1D PRO-14 AND 161-ARG--ASN-439 DEL</scope>
</reference>
<reference evidence="17" key="30">
    <citation type="journal article" date="2006" name="Cell">
        <title>Reconstitution, activities, and structure of the eukaryotic RNA exosome.</title>
        <authorList>
            <person name="Liu Q."/>
            <person name="Greimann J.C."/>
            <person name="Lima C.D."/>
        </authorList>
    </citation>
    <scope>X-RAY CRYSTALLOGRAPHY (3.35 ANGSTROMS)</scope>
    <scope>LACK OF CATALYTIC ACTIVITY</scope>
    <scope>RECONSTITUTION OF THE RNA EXOSOME CORE COMPLEX</scope>
</reference>
<reference key="31">
    <citation type="journal article" date="2007" name="Cell">
        <authorList>
            <person name="Liu Q."/>
            <person name="Greimann J.C."/>
            <person name="Lima C.D."/>
        </authorList>
    </citation>
    <scope>ERRATUM OF PUBMED:17174896</scope>
</reference>
<reference evidence="18 19" key="32">
    <citation type="journal article" date="2018" name="Cell">
        <title>Helicase-Dependent RNA Decay Illuminated by a Cryo-EM Structure of a Human Nuclear RNA Exosome-MTR4 Complex.</title>
        <authorList>
            <person name="Weick E.M."/>
            <person name="Puno M.R."/>
            <person name="Januszyk K."/>
            <person name="Zinder J.C."/>
            <person name="DiMattia M.A."/>
            <person name="Lima C.D."/>
        </authorList>
    </citation>
    <scope>STRUCTURE BY ELECTRON MICROSCOPY (3.45 ANGSTROMS)</scope>
    <scope>SUBUNIT</scope>
</reference>
<reference evidence="20" key="33">
    <citation type="journal article" date="2018" name="Elife">
        <title>Distinct and evolutionary conserved structural features of the human nuclear exosome complex.</title>
        <authorList>
            <person name="Gerlach P."/>
            <person name="Schuller J.M."/>
            <person name="Bonneau F."/>
            <person name="Basquin J."/>
            <person name="Reichelt P."/>
            <person name="Falk S."/>
            <person name="Conti E."/>
        </authorList>
    </citation>
    <scope>STRUCTURE BY ELECTRON MICROSCOPY (3.80 ANGSTROMS) OF THE RNA EXOSOME COMPLEX IN COMPLEX WITH MPP6</scope>
    <scope>SUBUNIT</scope>
</reference>